<accession>A0A2Z5CVQ4</accession>
<reference key="1">
    <citation type="journal article" date="2018" name="Plant Cell">
        <title>Discovery of UDP-glycosyltransferases and BAHD-acyltransferases involved in the biosynthesis of the antidiabetic plant metabolite montbretin A.</title>
        <authorList>
            <person name="Irmisch S."/>
            <person name="Jo S."/>
            <person name="Roach C.R."/>
            <person name="Jancsik S."/>
            <person name="Man Saint Yuen M."/>
            <person name="Madilao L.L."/>
            <person name="O'Neil-Johnson M."/>
            <person name="Williams R."/>
            <person name="Withers S.G."/>
            <person name="Bohlmann J."/>
        </authorList>
    </citation>
    <scope>NUCLEOTIDE SEQUENCE [MRNA]</scope>
    <scope>FUNCTION</scope>
    <scope>CATALYTIC ACTIVITY</scope>
    <scope>TISSUE SPECIFICITY</scope>
</reference>
<sequence>MSFTVTKTAPALITPSEPTPSGHILPLSFFDRLPFLRVFLVDMIMVYGRGDQPAKVIKEAVAKALVHYYPLAGRLTTDTDDGELSVACTGEGVWFVEATADCRMEDVNYLQVEPLMIPKEQMLPSHPEGVDPYTLPLMIQVTQFRCGGFAFATRANHAVFDGIGAGQIKVAIGEMARGLKHPTVKPVWCRDVIRKPIPSQISATEPHDTDLSPVSDIKFTNNQTNIECCSFDLSLDHINHLKDRFAKEVGKICSVFDVITAKLWQSRTRAIGLQPQTEVSLTFLLNIRQVVLHNELPPDGGYYGNCLVPLVNKAPSGQIANAPLFEIVRLIKEAKDDLLRKDSASLIGGMPPYKKPSYADLSIVDWRRLGLYEADFGWGGPMFLVPLNEHTVTSCSTYLFKSPVASKKDVCLVTYCIVKEHLEAFRAEMNDFT</sequence>
<dbReference type="EC" id="2.3.1.-" evidence="2"/>
<dbReference type="EMBL" id="MH365462">
    <property type="protein sequence ID" value="AXB26761.1"/>
    <property type="molecule type" value="mRNA"/>
</dbReference>
<dbReference type="SMR" id="A0A2Z5CVQ4"/>
<dbReference type="GO" id="GO:0016746">
    <property type="term" value="F:acyltransferase activity"/>
    <property type="evidence" value="ECO:0007669"/>
    <property type="project" value="UniProtKB-KW"/>
</dbReference>
<dbReference type="Gene3D" id="3.30.559.10">
    <property type="entry name" value="Chloramphenicol acetyltransferase-like domain"/>
    <property type="match status" value="2"/>
</dbReference>
<dbReference type="InterPro" id="IPR023213">
    <property type="entry name" value="CAT-like_dom_sf"/>
</dbReference>
<dbReference type="InterPro" id="IPR050898">
    <property type="entry name" value="Plant_acyltransferase"/>
</dbReference>
<dbReference type="PANTHER" id="PTHR31147">
    <property type="entry name" value="ACYL TRANSFERASE 4"/>
    <property type="match status" value="1"/>
</dbReference>
<dbReference type="PANTHER" id="PTHR31147:SF1">
    <property type="entry name" value="ACYL TRANSFERASE 4"/>
    <property type="match status" value="1"/>
</dbReference>
<dbReference type="Pfam" id="PF02458">
    <property type="entry name" value="Transferase"/>
    <property type="match status" value="1"/>
</dbReference>
<protein>
    <recommendedName>
        <fullName evidence="4">Myricetin 3-O-glucosyl 1,2-rhamnoside 6'-O-caffeoyltransferase AT1</fullName>
        <ecNumber evidence="2">2.3.1.-</ecNumber>
    </recommendedName>
    <alternativeName>
        <fullName evidence="3">Acyltransferase 1</fullName>
        <shortName evidence="3">CcAT1</shortName>
    </alternativeName>
</protein>
<name>AT1_CROXC</name>
<organism>
    <name type="scientific">Crocosmia x crocosmiiflora</name>
    <name type="common">Montbretia</name>
    <name type="synonym">Crocosmia aurea x Crocosmia pottsii</name>
    <dbReference type="NCBI Taxonomy" id="1053288"/>
    <lineage>
        <taxon>Eukaryota</taxon>
        <taxon>Viridiplantae</taxon>
        <taxon>Streptophyta</taxon>
        <taxon>Embryophyta</taxon>
        <taxon>Tracheophyta</taxon>
        <taxon>Spermatophyta</taxon>
        <taxon>Magnoliopsida</taxon>
        <taxon>Liliopsida</taxon>
        <taxon>Asparagales</taxon>
        <taxon>Iridaceae</taxon>
        <taxon>Crocoideae</taxon>
        <taxon>Freesieae</taxon>
        <taxon>Crocosmia</taxon>
    </lineage>
</organism>
<feature type="chain" id="PRO_0000448219" description="Myricetin 3-O-glucosyl 1,2-rhamnoside 6'-O-caffeoyltransferase AT1">
    <location>
        <begin position="1"/>
        <end position="433"/>
    </location>
</feature>
<feature type="active site" description="Proton acceptor" evidence="1">
    <location>
        <position position="157"/>
    </location>
</feature>
<feature type="active site" description="Proton acceptor" evidence="1">
    <location>
        <position position="375"/>
    </location>
</feature>
<comment type="function">
    <text evidence="2">Caffeoyltransferase involved in montbretin A (MbA) biosynthesis (PubMed:29967287). Catalyzes the caffeoylation of myricetin 3-O-beta-D-glucosyl 1,2-alpha-L-rhamnoside (MRG) to produce myricetin 3-O-(6'-O-caffeoyl)-beta-D-glucosyl 1,2-alpha-L-rhamnoside (mini-MbA), a precursor of MbA (PubMed:29967287). Mini-MbA and MbA are potent inhibitors of human pancreatic alpha-amylase and are being developed as drug candidates to treat type-2 diabetes (PubMed:29967287). In vitro, is able to catalyze the caffeoylation of quercetin 3-O-sophoroside (QGG), although QGG may not be a physiological substrate in vivo (PubMed:29967287). In vitro, can use coumaryl-CoA, feruloyl-CoA and acetyl-CoA, although these three acyl donors may not be physiological in vivo (PubMed:29967287).</text>
</comment>
<comment type="catalytic activity">
    <reaction evidence="2">
        <text>myricetin 3-O-[beta-D-glucosyl-(1-&gt;2)-alpha-L-rhamnoside] + (E)-caffeoyl-CoA = myricetin 3-O-[(6-O-(E)-caffeoyl-beta-D-glucosyl)-(1-&gt;2)-alpha-L-rhamnoside] + CoA</text>
        <dbReference type="Rhea" id="RHEA:61152"/>
        <dbReference type="ChEBI" id="CHEBI:57287"/>
        <dbReference type="ChEBI" id="CHEBI:87136"/>
        <dbReference type="ChEBI" id="CHEBI:144428"/>
        <dbReference type="ChEBI" id="CHEBI:144429"/>
    </reaction>
    <physiologicalReaction direction="left-to-right" evidence="2">
        <dbReference type="Rhea" id="RHEA:61153"/>
    </physiologicalReaction>
</comment>
<comment type="pathway">
    <text evidence="4">Flavonoid metabolism.</text>
</comment>
<comment type="tissue specificity">
    <text evidence="2">Expressed in young cromes.</text>
</comment>
<comment type="similarity">
    <text evidence="4">Belongs to the plant acyltransferase family.</text>
</comment>
<evidence type="ECO:0000250" key="1">
    <source>
        <dbReference type="UniProtKB" id="Q8W1W9"/>
    </source>
</evidence>
<evidence type="ECO:0000269" key="2">
    <source>
    </source>
</evidence>
<evidence type="ECO:0000303" key="3">
    <source>
    </source>
</evidence>
<evidence type="ECO:0000305" key="4"/>
<keyword id="KW-0012">Acyltransferase</keyword>
<keyword id="KW-0808">Transferase</keyword>
<proteinExistence type="evidence at protein level"/>
<gene>
    <name evidence="3" type="primary">AT1</name>
</gene>